<protein>
    <recommendedName>
        <fullName evidence="1">Polyribonucleotide nucleotidyltransferase</fullName>
        <ecNumber evidence="1">2.7.7.8</ecNumber>
    </recommendedName>
    <alternativeName>
        <fullName evidence="1">Polynucleotide phosphorylase</fullName>
        <shortName evidence="1">PNPase</shortName>
    </alternativeName>
</protein>
<name>PNP_PSEE4</name>
<proteinExistence type="inferred from homology"/>
<accession>Q1IF39</accession>
<gene>
    <name evidence="1" type="primary">pnp</name>
    <name type="ordered locus">PSEEN0799</name>
</gene>
<dbReference type="EC" id="2.7.7.8" evidence="1"/>
<dbReference type="EMBL" id="CT573326">
    <property type="protein sequence ID" value="CAK13715.1"/>
    <property type="molecule type" value="Genomic_DNA"/>
</dbReference>
<dbReference type="RefSeq" id="WP_011532145.1">
    <property type="nucleotide sequence ID" value="NC_008027.1"/>
</dbReference>
<dbReference type="SMR" id="Q1IF39"/>
<dbReference type="STRING" id="384676.PSEEN0799"/>
<dbReference type="GeneID" id="32804107"/>
<dbReference type="KEGG" id="pen:PSEEN0799"/>
<dbReference type="eggNOG" id="COG1185">
    <property type="taxonomic scope" value="Bacteria"/>
</dbReference>
<dbReference type="HOGENOM" id="CLU_004217_2_2_6"/>
<dbReference type="OrthoDB" id="9804305at2"/>
<dbReference type="Proteomes" id="UP000000658">
    <property type="component" value="Chromosome"/>
</dbReference>
<dbReference type="GO" id="GO:0005829">
    <property type="term" value="C:cytosol"/>
    <property type="evidence" value="ECO:0007669"/>
    <property type="project" value="TreeGrafter"/>
</dbReference>
<dbReference type="GO" id="GO:0000175">
    <property type="term" value="F:3'-5'-RNA exonuclease activity"/>
    <property type="evidence" value="ECO:0007669"/>
    <property type="project" value="TreeGrafter"/>
</dbReference>
<dbReference type="GO" id="GO:0000287">
    <property type="term" value="F:magnesium ion binding"/>
    <property type="evidence" value="ECO:0007669"/>
    <property type="project" value="UniProtKB-UniRule"/>
</dbReference>
<dbReference type="GO" id="GO:0004654">
    <property type="term" value="F:polyribonucleotide nucleotidyltransferase activity"/>
    <property type="evidence" value="ECO:0007669"/>
    <property type="project" value="UniProtKB-UniRule"/>
</dbReference>
<dbReference type="GO" id="GO:0003723">
    <property type="term" value="F:RNA binding"/>
    <property type="evidence" value="ECO:0007669"/>
    <property type="project" value="UniProtKB-UniRule"/>
</dbReference>
<dbReference type="GO" id="GO:0006402">
    <property type="term" value="P:mRNA catabolic process"/>
    <property type="evidence" value="ECO:0007669"/>
    <property type="project" value="UniProtKB-UniRule"/>
</dbReference>
<dbReference type="GO" id="GO:0006396">
    <property type="term" value="P:RNA processing"/>
    <property type="evidence" value="ECO:0007669"/>
    <property type="project" value="InterPro"/>
</dbReference>
<dbReference type="CDD" id="cd02393">
    <property type="entry name" value="KH-I_PNPase"/>
    <property type="match status" value="1"/>
</dbReference>
<dbReference type="CDD" id="cd11363">
    <property type="entry name" value="RNase_PH_PNPase_1"/>
    <property type="match status" value="1"/>
</dbReference>
<dbReference type="CDD" id="cd11364">
    <property type="entry name" value="RNase_PH_PNPase_2"/>
    <property type="match status" value="1"/>
</dbReference>
<dbReference type="CDD" id="cd04472">
    <property type="entry name" value="S1_PNPase"/>
    <property type="match status" value="1"/>
</dbReference>
<dbReference type="FunFam" id="2.40.50.140:FF:000023">
    <property type="entry name" value="Polyribonucleotide nucleotidyltransferase"/>
    <property type="match status" value="1"/>
</dbReference>
<dbReference type="FunFam" id="3.30.1370.10:FF:000001">
    <property type="entry name" value="Polyribonucleotide nucleotidyltransferase"/>
    <property type="match status" value="1"/>
</dbReference>
<dbReference type="FunFam" id="3.30.230.70:FF:000001">
    <property type="entry name" value="Polyribonucleotide nucleotidyltransferase"/>
    <property type="match status" value="1"/>
</dbReference>
<dbReference type="FunFam" id="3.30.230.70:FF:000002">
    <property type="entry name" value="Polyribonucleotide nucleotidyltransferase"/>
    <property type="match status" value="1"/>
</dbReference>
<dbReference type="Gene3D" id="3.30.230.70">
    <property type="entry name" value="GHMP Kinase, N-terminal domain"/>
    <property type="match status" value="2"/>
</dbReference>
<dbReference type="Gene3D" id="3.30.1370.10">
    <property type="entry name" value="K Homology domain, type 1"/>
    <property type="match status" value="1"/>
</dbReference>
<dbReference type="Gene3D" id="2.40.50.140">
    <property type="entry name" value="Nucleic acid-binding proteins"/>
    <property type="match status" value="1"/>
</dbReference>
<dbReference type="HAMAP" id="MF_01595">
    <property type="entry name" value="PNPase"/>
    <property type="match status" value="1"/>
</dbReference>
<dbReference type="InterPro" id="IPR001247">
    <property type="entry name" value="ExoRNase_PH_dom1"/>
</dbReference>
<dbReference type="InterPro" id="IPR015847">
    <property type="entry name" value="ExoRNase_PH_dom2"/>
</dbReference>
<dbReference type="InterPro" id="IPR036345">
    <property type="entry name" value="ExoRNase_PH_dom2_sf"/>
</dbReference>
<dbReference type="InterPro" id="IPR004087">
    <property type="entry name" value="KH_dom"/>
</dbReference>
<dbReference type="InterPro" id="IPR004088">
    <property type="entry name" value="KH_dom_type_1"/>
</dbReference>
<dbReference type="InterPro" id="IPR036612">
    <property type="entry name" value="KH_dom_type_1_sf"/>
</dbReference>
<dbReference type="InterPro" id="IPR012340">
    <property type="entry name" value="NA-bd_OB-fold"/>
</dbReference>
<dbReference type="InterPro" id="IPR012162">
    <property type="entry name" value="PNPase"/>
</dbReference>
<dbReference type="InterPro" id="IPR027408">
    <property type="entry name" value="PNPase/RNase_PH_dom_sf"/>
</dbReference>
<dbReference type="InterPro" id="IPR015848">
    <property type="entry name" value="PNPase_PH_RNA-bd_bac/org-type"/>
</dbReference>
<dbReference type="InterPro" id="IPR020568">
    <property type="entry name" value="Ribosomal_Su5_D2-typ_SF"/>
</dbReference>
<dbReference type="InterPro" id="IPR003029">
    <property type="entry name" value="S1_domain"/>
</dbReference>
<dbReference type="NCBIfam" id="TIGR03591">
    <property type="entry name" value="polynuc_phos"/>
    <property type="match status" value="1"/>
</dbReference>
<dbReference type="NCBIfam" id="NF008805">
    <property type="entry name" value="PRK11824.1"/>
    <property type="match status" value="1"/>
</dbReference>
<dbReference type="PANTHER" id="PTHR11252">
    <property type="entry name" value="POLYRIBONUCLEOTIDE NUCLEOTIDYLTRANSFERASE"/>
    <property type="match status" value="1"/>
</dbReference>
<dbReference type="PANTHER" id="PTHR11252:SF0">
    <property type="entry name" value="POLYRIBONUCLEOTIDE NUCLEOTIDYLTRANSFERASE 1, MITOCHONDRIAL"/>
    <property type="match status" value="1"/>
</dbReference>
<dbReference type="Pfam" id="PF00013">
    <property type="entry name" value="KH_1"/>
    <property type="match status" value="1"/>
</dbReference>
<dbReference type="Pfam" id="PF03726">
    <property type="entry name" value="PNPase"/>
    <property type="match status" value="1"/>
</dbReference>
<dbReference type="Pfam" id="PF01138">
    <property type="entry name" value="RNase_PH"/>
    <property type="match status" value="2"/>
</dbReference>
<dbReference type="Pfam" id="PF03725">
    <property type="entry name" value="RNase_PH_C"/>
    <property type="match status" value="2"/>
</dbReference>
<dbReference type="Pfam" id="PF00575">
    <property type="entry name" value="S1"/>
    <property type="match status" value="1"/>
</dbReference>
<dbReference type="PIRSF" id="PIRSF005499">
    <property type="entry name" value="PNPase"/>
    <property type="match status" value="1"/>
</dbReference>
<dbReference type="SMART" id="SM00322">
    <property type="entry name" value="KH"/>
    <property type="match status" value="1"/>
</dbReference>
<dbReference type="SMART" id="SM00316">
    <property type="entry name" value="S1"/>
    <property type="match status" value="1"/>
</dbReference>
<dbReference type="SUPFAM" id="SSF54791">
    <property type="entry name" value="Eukaryotic type KH-domain (KH-domain type I)"/>
    <property type="match status" value="1"/>
</dbReference>
<dbReference type="SUPFAM" id="SSF50249">
    <property type="entry name" value="Nucleic acid-binding proteins"/>
    <property type="match status" value="1"/>
</dbReference>
<dbReference type="SUPFAM" id="SSF55666">
    <property type="entry name" value="Ribonuclease PH domain 2-like"/>
    <property type="match status" value="2"/>
</dbReference>
<dbReference type="SUPFAM" id="SSF54211">
    <property type="entry name" value="Ribosomal protein S5 domain 2-like"/>
    <property type="match status" value="2"/>
</dbReference>
<dbReference type="PROSITE" id="PS50084">
    <property type="entry name" value="KH_TYPE_1"/>
    <property type="match status" value="1"/>
</dbReference>
<dbReference type="PROSITE" id="PS50126">
    <property type="entry name" value="S1"/>
    <property type="match status" value="1"/>
</dbReference>
<keyword id="KW-0963">Cytoplasm</keyword>
<keyword id="KW-0460">Magnesium</keyword>
<keyword id="KW-0479">Metal-binding</keyword>
<keyword id="KW-0548">Nucleotidyltransferase</keyword>
<keyword id="KW-0694">RNA-binding</keyword>
<keyword id="KW-0808">Transferase</keyword>
<evidence type="ECO:0000255" key="1">
    <source>
        <dbReference type="HAMAP-Rule" id="MF_01595"/>
    </source>
</evidence>
<sequence>MNPVIKTFQFGQSTVTLETGRIARQATGAVLVTVDNDVTVLVTVVGAKQADPGKGFFPLSVHYQEKTYAAGKIPGGFFKREGRPSEKETLTSRLIDRPIRPLFPEGFMNEVQVVCTVVSTSKKTDPDIAAMIGTSAALAISGIPFEGPIGAARVAFHESTGYLLNPTYEQLAASSLDMVVAGTSDAVLMVESEAQELTEDQMLGAVLFAHDEFQAVIKAVKELAAEAAKPTWDWKPADKNSALFDAIRAEFGEAVSQGYTITVKADRYARLGELRDQAVAKFSGEEGQPSAGEVKDIFGEIEYRTVRENIVNGKPRIDGRDTKTVRPLNIEVGVLPKTHGSALFTRGETQALVVATLGTARDAQLLDTLEGEKKDPFMLHYNFPPFSVGECGRMGGAGRREIGHGRLARRSVQAMLPAADVFPYTIRVVSEITESNGSSSMASVCGASLALMDAGVPMKAPVAGIAMGLVKEGEKFAVLTDILGDEDHLGDMDFKVAGTAKGVTALQMDIKINGITEEIMEIALGQALEARLNILGQMNQIIGESRTELSANAPTMIAMKIDTDKIRDVIGKGGATIRAICEETKASIDIEDDGSIKIFGETKEAADAAKQRILGITAEAEIGKIYVGKVERIVDFGAFVNILPGKDGLVHISMLSDARVEKVTDVLKEGQEVEVLVLDVDNRGRIKLSIKDVAAAKASGV</sequence>
<reference key="1">
    <citation type="journal article" date="2006" name="Nat. Biotechnol.">
        <title>Complete genome sequence of the entomopathogenic and metabolically versatile soil bacterium Pseudomonas entomophila.</title>
        <authorList>
            <person name="Vodovar N."/>
            <person name="Vallenet D."/>
            <person name="Cruveiller S."/>
            <person name="Rouy Z."/>
            <person name="Barbe V."/>
            <person name="Acosta C."/>
            <person name="Cattolico L."/>
            <person name="Jubin C."/>
            <person name="Lajus A."/>
            <person name="Segurens B."/>
            <person name="Vacherie B."/>
            <person name="Wincker P."/>
            <person name="Weissenbach J."/>
            <person name="Lemaitre B."/>
            <person name="Medigue C."/>
            <person name="Boccard F."/>
        </authorList>
    </citation>
    <scope>NUCLEOTIDE SEQUENCE [LARGE SCALE GENOMIC DNA]</scope>
    <source>
        <strain>L48</strain>
    </source>
</reference>
<organism>
    <name type="scientific">Pseudomonas entomophila (strain L48)</name>
    <dbReference type="NCBI Taxonomy" id="384676"/>
    <lineage>
        <taxon>Bacteria</taxon>
        <taxon>Pseudomonadati</taxon>
        <taxon>Pseudomonadota</taxon>
        <taxon>Gammaproteobacteria</taxon>
        <taxon>Pseudomonadales</taxon>
        <taxon>Pseudomonadaceae</taxon>
        <taxon>Pseudomonas</taxon>
    </lineage>
</organism>
<comment type="function">
    <text evidence="1">Involved in mRNA degradation. Catalyzes the phosphorolysis of single-stranded polyribonucleotides processively in the 3'- to 5'-direction.</text>
</comment>
<comment type="catalytic activity">
    <reaction evidence="1">
        <text>RNA(n+1) + phosphate = RNA(n) + a ribonucleoside 5'-diphosphate</text>
        <dbReference type="Rhea" id="RHEA:22096"/>
        <dbReference type="Rhea" id="RHEA-COMP:14527"/>
        <dbReference type="Rhea" id="RHEA-COMP:17342"/>
        <dbReference type="ChEBI" id="CHEBI:43474"/>
        <dbReference type="ChEBI" id="CHEBI:57930"/>
        <dbReference type="ChEBI" id="CHEBI:140395"/>
        <dbReference type="EC" id="2.7.7.8"/>
    </reaction>
</comment>
<comment type="cofactor">
    <cofactor evidence="1">
        <name>Mg(2+)</name>
        <dbReference type="ChEBI" id="CHEBI:18420"/>
    </cofactor>
</comment>
<comment type="subunit">
    <text evidence="1">Component of the RNA degradosome, which is a multiprotein complex involved in RNA processing and mRNA degradation.</text>
</comment>
<comment type="subcellular location">
    <subcellularLocation>
        <location evidence="1">Cytoplasm</location>
    </subcellularLocation>
</comment>
<comment type="similarity">
    <text evidence="1">Belongs to the polyribonucleotide nucleotidyltransferase family.</text>
</comment>
<feature type="chain" id="PRO_0000329780" description="Polyribonucleotide nucleotidyltransferase">
    <location>
        <begin position="1"/>
        <end position="701"/>
    </location>
</feature>
<feature type="domain" description="KH" evidence="1">
    <location>
        <begin position="554"/>
        <end position="613"/>
    </location>
</feature>
<feature type="domain" description="S1 motif" evidence="1">
    <location>
        <begin position="623"/>
        <end position="691"/>
    </location>
</feature>
<feature type="binding site" evidence="1">
    <location>
        <position position="487"/>
    </location>
    <ligand>
        <name>Mg(2+)</name>
        <dbReference type="ChEBI" id="CHEBI:18420"/>
    </ligand>
</feature>
<feature type="binding site" evidence="1">
    <location>
        <position position="493"/>
    </location>
    <ligand>
        <name>Mg(2+)</name>
        <dbReference type="ChEBI" id="CHEBI:18420"/>
    </ligand>
</feature>